<keyword id="KW-0131">Cell cycle</keyword>
<keyword id="KW-0132">Cell division</keyword>
<keyword id="KW-0159">Chromosome partition</keyword>
<keyword id="KW-0963">Cytoplasm</keyword>
<keyword id="KW-0229">DNA integration</keyword>
<keyword id="KW-0233">DNA recombination</keyword>
<keyword id="KW-0238">DNA-binding</keyword>
<gene>
    <name evidence="1" type="primary">xerC</name>
    <name type="ordered locus">ECP_4005</name>
</gene>
<organism>
    <name type="scientific">Escherichia coli O6:K15:H31 (strain 536 / UPEC)</name>
    <dbReference type="NCBI Taxonomy" id="362663"/>
    <lineage>
        <taxon>Bacteria</taxon>
        <taxon>Pseudomonadati</taxon>
        <taxon>Pseudomonadota</taxon>
        <taxon>Gammaproteobacteria</taxon>
        <taxon>Enterobacterales</taxon>
        <taxon>Enterobacteriaceae</taxon>
        <taxon>Escherichia</taxon>
    </lineage>
</organism>
<reference key="1">
    <citation type="journal article" date="2006" name="Mol. Microbiol.">
        <title>Role of pathogenicity island-associated integrases in the genome plasticity of uropathogenic Escherichia coli strain 536.</title>
        <authorList>
            <person name="Hochhut B."/>
            <person name="Wilde C."/>
            <person name="Balling G."/>
            <person name="Middendorf B."/>
            <person name="Dobrindt U."/>
            <person name="Brzuszkiewicz E."/>
            <person name="Gottschalk G."/>
            <person name="Carniel E."/>
            <person name="Hacker J."/>
        </authorList>
    </citation>
    <scope>NUCLEOTIDE SEQUENCE [LARGE SCALE GENOMIC DNA]</scope>
    <source>
        <strain>536 / UPEC</strain>
    </source>
</reference>
<feature type="chain" id="PRO_1000070002" description="Tyrosine recombinase XerC">
    <location>
        <begin position="1"/>
        <end position="298"/>
    </location>
</feature>
<feature type="domain" description="Core-binding (CB)" evidence="3">
    <location>
        <begin position="2"/>
        <end position="88"/>
    </location>
</feature>
<feature type="domain" description="Tyr recombinase" evidence="2">
    <location>
        <begin position="109"/>
        <end position="288"/>
    </location>
</feature>
<feature type="active site" evidence="1">
    <location>
        <position position="148"/>
    </location>
</feature>
<feature type="active site" evidence="1">
    <location>
        <position position="172"/>
    </location>
</feature>
<feature type="active site" evidence="1">
    <location>
        <position position="240"/>
    </location>
</feature>
<feature type="active site" evidence="1">
    <location>
        <position position="243"/>
    </location>
</feature>
<feature type="active site" evidence="1">
    <location>
        <position position="266"/>
    </location>
</feature>
<feature type="active site" description="O-(3'-phospho-DNA)-tyrosine intermediate" evidence="1">
    <location>
        <position position="275"/>
    </location>
</feature>
<evidence type="ECO:0000255" key="1">
    <source>
        <dbReference type="HAMAP-Rule" id="MF_01808"/>
    </source>
</evidence>
<evidence type="ECO:0000255" key="2">
    <source>
        <dbReference type="PROSITE-ProRule" id="PRU01246"/>
    </source>
</evidence>
<evidence type="ECO:0000255" key="3">
    <source>
        <dbReference type="PROSITE-ProRule" id="PRU01248"/>
    </source>
</evidence>
<comment type="function">
    <text evidence="1">Site-specific tyrosine recombinase, which acts by catalyzing the cutting and rejoining of the recombining DNA molecules. Binds cooperatively to specific DNA consensus sequences that are separated from XerD binding sites by a short central region, forming the heterotetrameric XerC-XerD complex that recombines DNA substrates. The complex is essential to convert dimers of the bacterial chromosome into monomers to permit their segregation at cell division. It also contributes to the segregational stability of plasmids. In the complex XerC specifically exchanges the top DNA strands.</text>
</comment>
<comment type="activity regulation">
    <text evidence="1">FtsK may regulate the catalytic switch between XerC and XerD in the heterotetrameric complex during the two steps of the recombination process.</text>
</comment>
<comment type="subunit">
    <text evidence="1">Forms a cyclic heterotetrameric complex composed of two molecules of XerC and two molecules of XerD, in which XerC interacts with XerD via its C-terminal region, XerD interacts with XerC via its C-terminal region and so on.</text>
</comment>
<comment type="subcellular location">
    <subcellularLocation>
        <location evidence="1">Cytoplasm</location>
    </subcellularLocation>
</comment>
<comment type="similarity">
    <text evidence="1">Belongs to the 'phage' integrase family. XerC subfamily.</text>
</comment>
<accession>Q0TAR4</accession>
<proteinExistence type="inferred from homology"/>
<sequence>MTDLHTDVERYLRYLSVERQLSPITLLNYQRQLEAIIHFASENGLQSWQQCDVTMVRNFAVRSRRKGLGAAGLALRLSALRSFFDWLVSQNELKANPAKGVSAPKAPRHLPKNIDVDDMSRLLDIDINDPLAVRDRAMLEVMYGAGLRLSELVGLDIKHLDLESGEVWVMGKGSKERRLPIGRNAVAWIEHWLDLRDLFGSEDDALFLSKLGKRISARNVQKRFAEWGIKQGLNNHVHPHKLRHSFATHMLESSGDLRGVQELLGHANLSTTQIYTHLDFQHLASVYDAAHPRAKRGK</sequence>
<name>XERC_ECOL5</name>
<protein>
    <recommendedName>
        <fullName evidence="1">Tyrosine recombinase XerC</fullName>
    </recommendedName>
</protein>
<dbReference type="EMBL" id="CP000247">
    <property type="protein sequence ID" value="ABG71965.1"/>
    <property type="molecule type" value="Genomic_DNA"/>
</dbReference>
<dbReference type="RefSeq" id="WP_000130675.1">
    <property type="nucleotide sequence ID" value="NC_008253.1"/>
</dbReference>
<dbReference type="SMR" id="Q0TAR4"/>
<dbReference type="KEGG" id="ecp:ECP_4005"/>
<dbReference type="HOGENOM" id="CLU_027562_9_0_6"/>
<dbReference type="Proteomes" id="UP000009182">
    <property type="component" value="Chromosome"/>
</dbReference>
<dbReference type="GO" id="GO:0005737">
    <property type="term" value="C:cytoplasm"/>
    <property type="evidence" value="ECO:0007669"/>
    <property type="project" value="UniProtKB-SubCell"/>
</dbReference>
<dbReference type="GO" id="GO:0003677">
    <property type="term" value="F:DNA binding"/>
    <property type="evidence" value="ECO:0007669"/>
    <property type="project" value="UniProtKB-KW"/>
</dbReference>
<dbReference type="GO" id="GO:0009037">
    <property type="term" value="F:tyrosine-based site-specific recombinase activity"/>
    <property type="evidence" value="ECO:0007669"/>
    <property type="project" value="UniProtKB-UniRule"/>
</dbReference>
<dbReference type="GO" id="GO:0051301">
    <property type="term" value="P:cell division"/>
    <property type="evidence" value="ECO:0007669"/>
    <property type="project" value="UniProtKB-KW"/>
</dbReference>
<dbReference type="GO" id="GO:0007059">
    <property type="term" value="P:chromosome segregation"/>
    <property type="evidence" value="ECO:0007669"/>
    <property type="project" value="UniProtKB-UniRule"/>
</dbReference>
<dbReference type="GO" id="GO:0006313">
    <property type="term" value="P:DNA transposition"/>
    <property type="evidence" value="ECO:0007669"/>
    <property type="project" value="UniProtKB-UniRule"/>
</dbReference>
<dbReference type="CDD" id="cd00798">
    <property type="entry name" value="INT_XerDC_C"/>
    <property type="match status" value="1"/>
</dbReference>
<dbReference type="FunFam" id="1.10.443.10:FF:000002">
    <property type="entry name" value="Tyrosine recombinase XerC"/>
    <property type="match status" value="1"/>
</dbReference>
<dbReference type="Gene3D" id="1.10.150.130">
    <property type="match status" value="1"/>
</dbReference>
<dbReference type="Gene3D" id="1.10.443.10">
    <property type="entry name" value="Intergrase catalytic core"/>
    <property type="match status" value="1"/>
</dbReference>
<dbReference type="HAMAP" id="MF_01808">
    <property type="entry name" value="Recomb_XerC_XerD"/>
    <property type="match status" value="1"/>
</dbReference>
<dbReference type="InterPro" id="IPR044068">
    <property type="entry name" value="CB"/>
</dbReference>
<dbReference type="InterPro" id="IPR011010">
    <property type="entry name" value="DNA_brk_join_enz"/>
</dbReference>
<dbReference type="InterPro" id="IPR013762">
    <property type="entry name" value="Integrase-like_cat_sf"/>
</dbReference>
<dbReference type="InterPro" id="IPR002104">
    <property type="entry name" value="Integrase_catalytic"/>
</dbReference>
<dbReference type="InterPro" id="IPR010998">
    <property type="entry name" value="Integrase_recombinase_N"/>
</dbReference>
<dbReference type="InterPro" id="IPR004107">
    <property type="entry name" value="Integrase_SAM-like_N"/>
</dbReference>
<dbReference type="InterPro" id="IPR011931">
    <property type="entry name" value="Recomb_XerC"/>
</dbReference>
<dbReference type="InterPro" id="IPR023009">
    <property type="entry name" value="Tyrosine_recombinase_XerC/XerD"/>
</dbReference>
<dbReference type="InterPro" id="IPR050090">
    <property type="entry name" value="Tyrosine_recombinase_XerCD"/>
</dbReference>
<dbReference type="NCBIfam" id="NF001399">
    <property type="entry name" value="PRK00283.1"/>
    <property type="match status" value="1"/>
</dbReference>
<dbReference type="NCBIfam" id="TIGR02224">
    <property type="entry name" value="recomb_XerC"/>
    <property type="match status" value="1"/>
</dbReference>
<dbReference type="PANTHER" id="PTHR30349">
    <property type="entry name" value="PHAGE INTEGRASE-RELATED"/>
    <property type="match status" value="1"/>
</dbReference>
<dbReference type="PANTHER" id="PTHR30349:SF81">
    <property type="entry name" value="TYROSINE RECOMBINASE XERC"/>
    <property type="match status" value="1"/>
</dbReference>
<dbReference type="Pfam" id="PF02899">
    <property type="entry name" value="Phage_int_SAM_1"/>
    <property type="match status" value="1"/>
</dbReference>
<dbReference type="Pfam" id="PF00589">
    <property type="entry name" value="Phage_integrase"/>
    <property type="match status" value="1"/>
</dbReference>
<dbReference type="SUPFAM" id="SSF56349">
    <property type="entry name" value="DNA breaking-rejoining enzymes"/>
    <property type="match status" value="1"/>
</dbReference>
<dbReference type="SUPFAM" id="SSF47823">
    <property type="entry name" value="lambda integrase-like, N-terminal domain"/>
    <property type="match status" value="1"/>
</dbReference>
<dbReference type="PROSITE" id="PS51900">
    <property type="entry name" value="CB"/>
    <property type="match status" value="1"/>
</dbReference>
<dbReference type="PROSITE" id="PS51898">
    <property type="entry name" value="TYR_RECOMBINASE"/>
    <property type="match status" value="1"/>
</dbReference>